<organism>
    <name type="scientific">Oxyopes takobius</name>
    <name type="common">Lynx spider</name>
    <name type="synonym">Oxyopes foliiformis</name>
    <dbReference type="NCBI Taxonomy" id="666126"/>
    <lineage>
        <taxon>Eukaryota</taxon>
        <taxon>Metazoa</taxon>
        <taxon>Ecdysozoa</taxon>
        <taxon>Arthropoda</taxon>
        <taxon>Chelicerata</taxon>
        <taxon>Arachnida</taxon>
        <taxon>Araneae</taxon>
        <taxon>Araneomorphae</taxon>
        <taxon>Entelegynae</taxon>
        <taxon>Lycosoidea</taxon>
        <taxon>Oxyopidae</taxon>
        <taxon>Oxyopes</taxon>
    </lineage>
</organism>
<accession>P86716</accession>
<accession>S4TYR3</accession>
<sequence length="166" mass="18421">MKFALVLLGVCAFYLVNATGDLETELEASELQELQEALDLIGETPLESLEAEELEEARKFKWGKLFSTAKKLYKKGKKLSKNKNFKKALKFGKQLAKNLQAGEEHEPGTPVGNNKCWAIGTTCSDDCDCCPEHHCHCPAGKWLPGLFRCTCQVTESDKVNKCPPAE</sequence>
<dbReference type="EMBL" id="JX134895">
    <property type="protein sequence ID" value="AGG39774.1"/>
    <property type="molecule type" value="mRNA"/>
</dbReference>
<dbReference type="PDB" id="2N85">
    <property type="method" value="NMR"/>
    <property type="chains" value="A=59-99"/>
</dbReference>
<dbReference type="PDB" id="2N86">
    <property type="method" value="NMR"/>
    <property type="chains" value="A=108-166"/>
</dbReference>
<dbReference type="PDBsum" id="2N85"/>
<dbReference type="PDBsum" id="2N86"/>
<dbReference type="SMR" id="P86716"/>
<dbReference type="TCDB" id="8.B.12.1.6">
    <property type="family name" value="the spider toxin (stx2) family"/>
</dbReference>
<dbReference type="ArachnoServer" id="AS001675">
    <property type="toxin name" value="M-oxotoxin-Ot3a"/>
</dbReference>
<dbReference type="GO" id="GO:0005576">
    <property type="term" value="C:extracellular region"/>
    <property type="evidence" value="ECO:0007669"/>
    <property type="project" value="UniProtKB-SubCell"/>
</dbReference>
<dbReference type="GO" id="GO:0090729">
    <property type="term" value="F:toxin activity"/>
    <property type="evidence" value="ECO:0007669"/>
    <property type="project" value="UniProtKB-KW"/>
</dbReference>
<dbReference type="GO" id="GO:0042742">
    <property type="term" value="P:defense response to bacterium"/>
    <property type="evidence" value="ECO:0007669"/>
    <property type="project" value="UniProtKB-KW"/>
</dbReference>
<dbReference type="GO" id="GO:0031640">
    <property type="term" value="P:killing of cells of another organism"/>
    <property type="evidence" value="ECO:0007669"/>
    <property type="project" value="UniProtKB-KW"/>
</dbReference>
<dbReference type="InterPro" id="IPR044061">
    <property type="entry name" value="OXYTX_ICK"/>
</dbReference>
<dbReference type="PROSITE" id="PS51861">
    <property type="entry name" value="OXYTX_ICK"/>
    <property type="match status" value="1"/>
</dbReference>
<evidence type="ECO:0000255" key="1"/>
<evidence type="ECO:0000255" key="2">
    <source>
        <dbReference type="PROSITE-ProRule" id="PRU01208"/>
    </source>
</evidence>
<evidence type="ECO:0000269" key="3">
    <source>
    </source>
</evidence>
<evidence type="ECO:0000269" key="4">
    <source>
    </source>
</evidence>
<evidence type="ECO:0000303" key="5">
    <source>
    </source>
</evidence>
<evidence type="ECO:0000305" key="6"/>
<evidence type="ECO:0000305" key="7">
    <source>
    </source>
</evidence>
<evidence type="ECO:0000312" key="8">
    <source>
        <dbReference type="PDB" id="2N86"/>
    </source>
</evidence>
<evidence type="ECO:0007829" key="9">
    <source>
        <dbReference type="PDB" id="2N85"/>
    </source>
</evidence>
<evidence type="ECO:0007829" key="10">
    <source>
        <dbReference type="PDB" id="2N86"/>
    </source>
</evidence>
<feature type="signal peptide" evidence="1">
    <location>
        <begin position="1"/>
        <end position="18"/>
    </location>
</feature>
<feature type="propeptide" id="PRO_0000425692" evidence="3">
    <location>
        <begin position="19"/>
        <end position="58"/>
    </location>
</feature>
<feature type="chain" id="PRO_0000425693" description="Spiderine-1a" evidence="3">
    <location>
        <begin position="59"/>
        <end position="166"/>
    </location>
</feature>
<feature type="domain" description="Oxytoxin-type inhibitor cystine knot (ICK)" evidence="2">
    <location>
        <begin position="113"/>
        <end position="166"/>
    </location>
</feature>
<feature type="region of interest" description="Linear cationic cytotoxin domain" evidence="6">
    <location>
        <begin position="59"/>
        <end position="99"/>
    </location>
</feature>
<feature type="disulfide bond" evidence="4 8">
    <location>
        <begin position="116"/>
        <end position="130"/>
    </location>
</feature>
<feature type="disulfide bond" evidence="4 8">
    <location>
        <begin position="123"/>
        <end position="135"/>
    </location>
</feature>
<feature type="disulfide bond" evidence="4 8">
    <location>
        <begin position="127"/>
        <end position="162"/>
    </location>
</feature>
<feature type="disulfide bond" evidence="4 8">
    <location>
        <begin position="129"/>
        <end position="151"/>
    </location>
</feature>
<feature type="disulfide bond" evidence="4 8">
    <location>
        <begin position="137"/>
        <end position="149"/>
    </location>
</feature>
<feature type="helix" evidence="9">
    <location>
        <begin position="62"/>
        <end position="81"/>
    </location>
</feature>
<feature type="helix" evidence="9">
    <location>
        <begin position="84"/>
        <end position="97"/>
    </location>
</feature>
<feature type="strand" evidence="10">
    <location>
        <begin position="131"/>
        <end position="136"/>
    </location>
</feature>
<feature type="strand" evidence="10">
    <location>
        <begin position="141"/>
        <end position="144"/>
    </location>
</feature>
<feature type="strand" evidence="10">
    <location>
        <begin position="150"/>
        <end position="153"/>
    </location>
</feature>
<keyword id="KW-0002">3D-structure</keyword>
<keyword id="KW-0044">Antibiotic</keyword>
<keyword id="KW-0929">Antimicrobial</keyword>
<keyword id="KW-0204">Cytolysis</keyword>
<keyword id="KW-0903">Direct protein sequencing</keyword>
<keyword id="KW-1015">Disulfide bond</keyword>
<keyword id="KW-0960">Knottin</keyword>
<keyword id="KW-0964">Secreted</keyword>
<keyword id="KW-0732">Signal</keyword>
<keyword id="KW-0800">Toxin</keyword>
<protein>
    <recommendedName>
        <fullName evidence="5">Spiderine-1a</fullName>
    </recommendedName>
    <alternativeName>
        <fullName evidence="5">OtTx1a</fullName>
    </alternativeName>
</protein>
<comment type="function">
    <text evidence="3">Has antimicrobial, insecticidal, cytolytic and cytotoxic activity. Active against E.coli DH5alpha, E.faecalis VKM B 871, B.subtilis VKM B 501, A.globiformis VKM Ac 1112, P.aeruginosa PAO1 and S.aureus 209P in submicromolar or low micromolar ranges. Lyses human erythrocytes. Kills HeLA and A549 cells.</text>
</comment>
<comment type="subcellular location">
    <subcellularLocation>
        <location evidence="3">Secreted</location>
    </subcellularLocation>
</comment>
<comment type="tissue specificity">
    <text evidence="7">Expressed by the venom gland.</text>
</comment>
<comment type="domain">
    <text evidence="4">The presence of a 'disulfide through disulfide knot' structurally defines this protein as a knottin.</text>
</comment>
<comment type="domain">
    <text evidence="3 4">The N-terminal part of the mature protein (59-100) forms an alpha-helix which acts as a membrane-active peptide. It is necessary and sufficient for the toxin's antimicrobial, insecticidal, cytolytic and cytotoxic activity.</text>
</comment>
<comment type="mass spectrometry" mass="12030.0" method="MALDI" evidence="3"/>
<comment type="toxic dose">
    <text evidence="3">LD(50) is 75 ug/g on flesh fly larvae (S.carnaria).</text>
</comment>
<comment type="toxic dose">
    <text evidence="3">PD(50) is 75 ug/g on M.sexta first instar larvae.</text>
</comment>
<comment type="similarity">
    <text evidence="6">Belongs to the spiderine family. Cationic/spiderine subfamily.</text>
</comment>
<proteinExistence type="evidence at protein level"/>
<reference key="1">
    <citation type="journal article" date="2013" name="FEBS J.">
        <title>Spider toxins comprising disulfide-rich and linear amphipathic domains: A new class of molecules identified in the lynx spider Oxyopes takobius.</title>
        <authorList>
            <person name="Vassilevski A.A."/>
            <person name="Sachkova M.Y."/>
            <person name="Ignatova A.A."/>
            <person name="Kozlov S.A."/>
            <person name="Feofanov A.V."/>
            <person name="Grishin E.V."/>
        </authorList>
    </citation>
    <scope>NUCLEOTIDE SEQUENCE [MRNA]</scope>
    <scope>PROTEIN SEQUENCE OF 59-93</scope>
    <scope>FUNCTION</scope>
    <scope>SUBCELLULAR LOCATION</scope>
    <scope>MASS SPECTROMETRY</scope>
    <scope>DOMAIN</scope>
    <scope>TOXIC DOSE</scope>
    <source>
        <tissue>Venom</tissue>
        <tissue>Venom gland</tissue>
    </source>
</reference>
<reference key="2">
    <citation type="journal article" date="2017" name="Protein Sci.">
        <title>Modular toxin from the lynx spider Oxyopes takobius: Structure of spiderine domains in solution and membrane-mimicking environment.</title>
        <authorList>
            <person name="Nadezhdin K.D."/>
            <person name="Romanovskaia D.D."/>
            <person name="Sachkova M.Y."/>
            <person name="Oparin P.B."/>
            <person name="Kovalchuk S.I."/>
            <person name="Grishin E.V."/>
            <person name="Arseniev A.S."/>
            <person name="Vassilevski A.A."/>
        </authorList>
    </citation>
    <scope>STRUCTURE BY NMR OF 59-99 AND 108-166</scope>
    <scope>DISULFIDE BOND</scope>
</reference>
<name>SPN1A_OXYTA</name>